<gene>
    <name evidence="4" type="primary">SYT15B</name>
</gene>
<keyword id="KW-1185">Reference proteome</keyword>
<keyword id="KW-0677">Repeat</keyword>
<organism>
    <name type="scientific">Homo sapiens</name>
    <name type="common">Human</name>
    <dbReference type="NCBI Taxonomy" id="9606"/>
    <lineage>
        <taxon>Eukaryota</taxon>
        <taxon>Metazoa</taxon>
        <taxon>Chordata</taxon>
        <taxon>Craniata</taxon>
        <taxon>Vertebrata</taxon>
        <taxon>Euteleostomi</taxon>
        <taxon>Mammalia</taxon>
        <taxon>Eutheria</taxon>
        <taxon>Euarchontoglires</taxon>
        <taxon>Primates</taxon>
        <taxon>Haplorrhini</taxon>
        <taxon>Catarrhini</taxon>
        <taxon>Hominidae</taxon>
        <taxon>Homo</taxon>
    </lineage>
</organism>
<comment type="similarity">
    <text evidence="3">Belongs to the synaptotagmin family.</text>
</comment>
<protein>
    <recommendedName>
        <fullName evidence="3">Synaptotagmin-15B</fullName>
    </recommendedName>
</protein>
<sequence length="474" mass="52213">MGVVLSPHPAPSRREPLAPLAPGTRPGWSPAVSGSSRSALRPSTAGPGPGPGTGWGGTAASGRWVPAPAVHCAAPRAAAGHQQHHGPPLCSPDGAPRRFKRRPGSPAPAAQTGETSLREQPHGGPPAVPFVVPPTLQGRDWVPLHSGEWADAPWDPCPASELLPHTSSGGLGDACMVGAINPELYKFPEDKSETDFPDGCLGRLWFSVEYEQEAERLLVGLIKAQHLQAPSETCSPLVKLYLLPDERRFLQSKTKRKTSNPQFDEHFIFQVSSKTITQRVLKFSVYHVDRQRKHQLLGQVLFPLKNETLVGDCRRVIWRDLEAESLEPPSEFGDLQFCLSYNDYLSRLTVVVLRAKGLRLQEDRGIVSVFVKVSLMNHNKFVKCKKTSAVLGSINPVYNETFSFKADATELDTASLSLTVVQNMEGDKSQQLGRVVVGPYMYTRGRELEHWDEMLSKPKELVKRWHALCRTTEP</sequence>
<accession>X6R8R1</accession>
<evidence type="ECO:0000255" key="1">
    <source>
        <dbReference type="PROSITE-ProRule" id="PRU00041"/>
    </source>
</evidence>
<evidence type="ECO:0000256" key="2">
    <source>
        <dbReference type="SAM" id="MobiDB-lite"/>
    </source>
</evidence>
<evidence type="ECO:0000305" key="3"/>
<evidence type="ECO:0000312" key="4">
    <source>
        <dbReference type="HGNC" id="HGNC:51487"/>
    </source>
</evidence>
<dbReference type="EMBL" id="FO681492">
    <property type="status" value="NOT_ANNOTATED_CDS"/>
    <property type="molecule type" value="Genomic_DNA"/>
</dbReference>
<dbReference type="RefSeq" id="NP_001357111.1">
    <property type="nucleotide sequence ID" value="NM_001370182.1"/>
</dbReference>
<dbReference type="RefSeq" id="XP_006718156.1">
    <property type="nucleotide sequence ID" value="XM_006718093.3"/>
</dbReference>
<dbReference type="SMR" id="X6R8R1"/>
<dbReference type="MassIVE" id="X6R8R1"/>
<dbReference type="PeptideAtlas" id="X6R8R1"/>
<dbReference type="Antibodypedia" id="66340">
    <property type="antibodies" value="19 antibodies from 10 providers"/>
</dbReference>
<dbReference type="Ensembl" id="ENST00000623662.4">
    <property type="protein sequence ID" value="ENSP00000485217.1"/>
    <property type="gene ID" value="ENSG00000277758.6"/>
</dbReference>
<dbReference type="Ensembl" id="ENST00000673006.3">
    <property type="protein sequence ID" value="ENSP00000500300.1"/>
    <property type="gene ID" value="ENSG00000288175.3"/>
</dbReference>
<dbReference type="GeneID" id="102724488"/>
<dbReference type="UCSC" id="uc001jeb.4">
    <property type="organism name" value="human"/>
</dbReference>
<dbReference type="AGR" id="HGNC:51487"/>
<dbReference type="GeneCards" id="SYT15B"/>
<dbReference type="HGNC" id="HGNC:51487">
    <property type="gene designation" value="SYT15B"/>
</dbReference>
<dbReference type="HPA" id="ENSG00000204176">
    <property type="expression patterns" value="Low tissue specificity"/>
</dbReference>
<dbReference type="HPA" id="ENSG00000277758">
    <property type="expression patterns" value="Tissue enhanced (lung)"/>
</dbReference>
<dbReference type="OpenTargets" id="ENSG00000204176"/>
<dbReference type="OpenTargets" id="ENSG00000277758"/>
<dbReference type="VEuPathDB" id="HostDB:ENSG00000204176"/>
<dbReference type="VEuPathDB" id="HostDB:ENSG00000277758"/>
<dbReference type="GeneTree" id="ENSGT00940000160819"/>
<dbReference type="OrthoDB" id="10259057at2759"/>
<dbReference type="PhylomeDB" id="X6R8R1"/>
<dbReference type="BioGRID-ORCS" id="102724488">
    <property type="hits" value="0 hits in 4 CRISPR screens"/>
</dbReference>
<dbReference type="PRO" id="PR:X6R8R1"/>
<dbReference type="Proteomes" id="UP000005640">
    <property type="component" value="Chromosome 10"/>
</dbReference>
<dbReference type="Bgee" id="ENSG00000204176">
    <property type="expression patterns" value="Expressed in male germ line stem cell (sensu Vertebrata) in testis and 99 other cell types or tissues"/>
</dbReference>
<dbReference type="ExpressionAtlas" id="X6R8R1">
    <property type="expression patterns" value="baseline and differential"/>
</dbReference>
<dbReference type="GO" id="GO:0070382">
    <property type="term" value="C:exocytic vesicle"/>
    <property type="evidence" value="ECO:0000318"/>
    <property type="project" value="GO_Central"/>
</dbReference>
<dbReference type="GO" id="GO:0005886">
    <property type="term" value="C:plasma membrane"/>
    <property type="evidence" value="ECO:0000318"/>
    <property type="project" value="GO_Central"/>
</dbReference>
<dbReference type="GO" id="GO:0061891">
    <property type="term" value="F:calcium ion sensor activity"/>
    <property type="evidence" value="ECO:0000318"/>
    <property type="project" value="GO_Central"/>
</dbReference>
<dbReference type="GO" id="GO:0005544">
    <property type="term" value="F:calcium-dependent phospholipid binding"/>
    <property type="evidence" value="ECO:0000318"/>
    <property type="project" value="GO_Central"/>
</dbReference>
<dbReference type="GO" id="GO:0000149">
    <property type="term" value="F:SNARE binding"/>
    <property type="evidence" value="ECO:0000318"/>
    <property type="project" value="GO_Central"/>
</dbReference>
<dbReference type="GO" id="GO:0017158">
    <property type="term" value="P:regulation of calcium ion-dependent exocytosis"/>
    <property type="evidence" value="ECO:0000318"/>
    <property type="project" value="GO_Central"/>
</dbReference>
<dbReference type="GO" id="GO:0016192">
    <property type="term" value="P:vesicle-mediated transport"/>
    <property type="evidence" value="ECO:0000318"/>
    <property type="project" value="GO_Central"/>
</dbReference>
<dbReference type="CDD" id="cd08390">
    <property type="entry name" value="C2A_Synaptotagmin-15-17"/>
    <property type="match status" value="1"/>
</dbReference>
<dbReference type="CDD" id="cd08409">
    <property type="entry name" value="C2B_Synaptotagmin-15"/>
    <property type="match status" value="1"/>
</dbReference>
<dbReference type="FunFam" id="2.60.40.150:FF:000161">
    <property type="entry name" value="Synaptotagmin 15"/>
    <property type="match status" value="1"/>
</dbReference>
<dbReference type="FunFam" id="2.60.40.150:FF:000162">
    <property type="entry name" value="Synaptotagmin-15"/>
    <property type="match status" value="1"/>
</dbReference>
<dbReference type="Gene3D" id="2.60.40.150">
    <property type="entry name" value="C2 domain"/>
    <property type="match status" value="2"/>
</dbReference>
<dbReference type="InterPro" id="IPR000008">
    <property type="entry name" value="C2_dom"/>
</dbReference>
<dbReference type="InterPro" id="IPR035892">
    <property type="entry name" value="C2_domain_sf"/>
</dbReference>
<dbReference type="InterPro" id="IPR047897">
    <property type="entry name" value="Synaptotagmin-15/17_C2A"/>
</dbReference>
<dbReference type="PANTHER" id="PTHR10024">
    <property type="entry name" value="SYNAPTOTAGMIN"/>
    <property type="match status" value="1"/>
</dbReference>
<dbReference type="PANTHER" id="PTHR10024:SF234">
    <property type="entry name" value="SYNAPTOTAGMIN-15-RELATED"/>
    <property type="match status" value="1"/>
</dbReference>
<dbReference type="Pfam" id="PF00168">
    <property type="entry name" value="C2"/>
    <property type="match status" value="2"/>
</dbReference>
<dbReference type="SMART" id="SM00239">
    <property type="entry name" value="C2"/>
    <property type="match status" value="2"/>
</dbReference>
<dbReference type="SUPFAM" id="SSF49562">
    <property type="entry name" value="C2 domain (Calcium/lipid-binding domain, CaLB)"/>
    <property type="match status" value="2"/>
</dbReference>
<dbReference type="PROSITE" id="PS50004">
    <property type="entry name" value="C2"/>
    <property type="match status" value="2"/>
</dbReference>
<proteinExistence type="inferred from homology"/>
<feature type="chain" id="PRO_0000455537" description="Synaptotagmin-15B">
    <location>
        <begin position="1"/>
        <end position="474"/>
    </location>
</feature>
<feature type="domain" description="C2 1" evidence="1">
    <location>
        <begin position="200"/>
        <end position="317"/>
    </location>
</feature>
<feature type="domain" description="C2 2" evidence="1">
    <location>
        <begin position="331"/>
        <end position="452"/>
    </location>
</feature>
<feature type="region of interest" description="Disordered" evidence="2">
    <location>
        <begin position="1"/>
        <end position="62"/>
    </location>
</feature>
<feature type="region of interest" description="Disordered" evidence="2">
    <location>
        <begin position="75"/>
        <end position="128"/>
    </location>
</feature>
<feature type="compositionally biased region" description="Low complexity" evidence="2">
    <location>
        <begin position="75"/>
        <end position="88"/>
    </location>
</feature>
<reference key="1">
    <citation type="journal article" date="2004" name="Nature">
        <title>The DNA sequence and comparative analysis of human chromosome 10.</title>
        <authorList>
            <person name="Deloukas P."/>
            <person name="Earthrowl M.E."/>
            <person name="Grafham D.V."/>
            <person name="Rubenfield M."/>
            <person name="French L."/>
            <person name="Steward C.A."/>
            <person name="Sims S.K."/>
            <person name="Jones M.C."/>
            <person name="Searle S."/>
            <person name="Scott C."/>
            <person name="Howe K."/>
            <person name="Hunt S.E."/>
            <person name="Andrews T.D."/>
            <person name="Gilbert J.G.R."/>
            <person name="Swarbreck D."/>
            <person name="Ashurst J.L."/>
            <person name="Taylor A."/>
            <person name="Battles J."/>
            <person name="Bird C.P."/>
            <person name="Ainscough R."/>
            <person name="Almeida J.P."/>
            <person name="Ashwell R.I.S."/>
            <person name="Ambrose K.D."/>
            <person name="Babbage A.K."/>
            <person name="Bagguley C.L."/>
            <person name="Bailey J."/>
            <person name="Banerjee R."/>
            <person name="Bates K."/>
            <person name="Beasley H."/>
            <person name="Bray-Allen S."/>
            <person name="Brown A.J."/>
            <person name="Brown J.Y."/>
            <person name="Burford D.C."/>
            <person name="Burrill W."/>
            <person name="Burton J."/>
            <person name="Cahill P."/>
            <person name="Camire D."/>
            <person name="Carter N.P."/>
            <person name="Chapman J.C."/>
            <person name="Clark S.Y."/>
            <person name="Clarke G."/>
            <person name="Clee C.M."/>
            <person name="Clegg S."/>
            <person name="Corby N."/>
            <person name="Coulson A."/>
            <person name="Dhami P."/>
            <person name="Dutta I."/>
            <person name="Dunn M."/>
            <person name="Faulkner L."/>
            <person name="Frankish A."/>
            <person name="Frankland J.A."/>
            <person name="Garner P."/>
            <person name="Garnett J."/>
            <person name="Gribble S."/>
            <person name="Griffiths C."/>
            <person name="Grocock R."/>
            <person name="Gustafson E."/>
            <person name="Hammond S."/>
            <person name="Harley J.L."/>
            <person name="Hart E."/>
            <person name="Heath P.D."/>
            <person name="Ho T.P."/>
            <person name="Hopkins B."/>
            <person name="Horne J."/>
            <person name="Howden P.J."/>
            <person name="Huckle E."/>
            <person name="Hynds C."/>
            <person name="Johnson C."/>
            <person name="Johnson D."/>
            <person name="Kana A."/>
            <person name="Kay M."/>
            <person name="Kimberley A.M."/>
            <person name="Kershaw J.K."/>
            <person name="Kokkinaki M."/>
            <person name="Laird G.K."/>
            <person name="Lawlor S."/>
            <person name="Lee H.M."/>
            <person name="Leongamornlert D.A."/>
            <person name="Laird G."/>
            <person name="Lloyd C."/>
            <person name="Lloyd D.M."/>
            <person name="Loveland J."/>
            <person name="Lovell J."/>
            <person name="McLaren S."/>
            <person name="McLay K.E."/>
            <person name="McMurray A."/>
            <person name="Mashreghi-Mohammadi M."/>
            <person name="Matthews L."/>
            <person name="Milne S."/>
            <person name="Nickerson T."/>
            <person name="Nguyen M."/>
            <person name="Overton-Larty E."/>
            <person name="Palmer S.A."/>
            <person name="Pearce A.V."/>
            <person name="Peck A.I."/>
            <person name="Pelan S."/>
            <person name="Phillimore B."/>
            <person name="Porter K."/>
            <person name="Rice C.M."/>
            <person name="Rogosin A."/>
            <person name="Ross M.T."/>
            <person name="Sarafidou T."/>
            <person name="Sehra H.K."/>
            <person name="Shownkeen R."/>
            <person name="Skuce C.D."/>
            <person name="Smith M."/>
            <person name="Standring L."/>
            <person name="Sycamore N."/>
            <person name="Tester J."/>
            <person name="Thorpe A."/>
            <person name="Torcasso W."/>
            <person name="Tracey A."/>
            <person name="Tromans A."/>
            <person name="Tsolas J."/>
            <person name="Wall M."/>
            <person name="Walsh J."/>
            <person name="Wang H."/>
            <person name="Weinstock K."/>
            <person name="West A.P."/>
            <person name="Willey D.L."/>
            <person name="Whitehead S.L."/>
            <person name="Wilming L."/>
            <person name="Wray P.W."/>
            <person name="Young L."/>
            <person name="Chen Y."/>
            <person name="Lovering R.C."/>
            <person name="Moschonas N.K."/>
            <person name="Siebert R."/>
            <person name="Fechtel K."/>
            <person name="Bentley D."/>
            <person name="Durbin R.M."/>
            <person name="Hubbard T."/>
            <person name="Doucette-Stamm L."/>
            <person name="Beck S."/>
            <person name="Smith D.R."/>
            <person name="Rogers J."/>
        </authorList>
    </citation>
    <scope>NUCLEOTIDE SEQUENCE [LARGE SCALE GENOMIC DNA]</scope>
</reference>
<name>ST15B_HUMAN</name>